<keyword id="KW-0067">ATP-binding</keyword>
<keyword id="KW-0414">Isoprene biosynthesis</keyword>
<keyword id="KW-0418">Kinase</keyword>
<keyword id="KW-0547">Nucleotide-binding</keyword>
<keyword id="KW-1185">Reference proteome</keyword>
<keyword id="KW-0808">Transferase</keyword>
<comment type="function">
    <text evidence="1">Catalyzes the phosphorylation of the position 2 hydroxy group of 4-diphosphocytidyl-2C-methyl-D-erythritol.</text>
</comment>
<comment type="catalytic activity">
    <reaction evidence="1">
        <text>4-CDP-2-C-methyl-D-erythritol + ATP = 4-CDP-2-C-methyl-D-erythritol 2-phosphate + ADP + H(+)</text>
        <dbReference type="Rhea" id="RHEA:18437"/>
        <dbReference type="ChEBI" id="CHEBI:15378"/>
        <dbReference type="ChEBI" id="CHEBI:30616"/>
        <dbReference type="ChEBI" id="CHEBI:57823"/>
        <dbReference type="ChEBI" id="CHEBI:57919"/>
        <dbReference type="ChEBI" id="CHEBI:456216"/>
        <dbReference type="EC" id="2.7.1.148"/>
    </reaction>
</comment>
<comment type="pathway">
    <text evidence="1">Isoprenoid biosynthesis; isopentenyl diphosphate biosynthesis via DXP pathway; isopentenyl diphosphate from 1-deoxy-D-xylulose 5-phosphate: step 3/6.</text>
</comment>
<comment type="similarity">
    <text evidence="1">Belongs to the GHMP kinase family. IspE subfamily.</text>
</comment>
<accession>A7HR11</accession>
<proteinExistence type="inferred from homology"/>
<organism>
    <name type="scientific">Parvibaculum lavamentivorans (strain DS-1 / DSM 13023 / NCIMB 13966)</name>
    <dbReference type="NCBI Taxonomy" id="402881"/>
    <lineage>
        <taxon>Bacteria</taxon>
        <taxon>Pseudomonadati</taxon>
        <taxon>Pseudomonadota</taxon>
        <taxon>Alphaproteobacteria</taxon>
        <taxon>Hyphomicrobiales</taxon>
        <taxon>Parvibaculaceae</taxon>
        <taxon>Parvibaculum</taxon>
    </lineage>
</organism>
<feature type="chain" id="PRO_0000335735" description="4-diphosphocytidyl-2-C-methyl-D-erythritol kinase">
    <location>
        <begin position="1"/>
        <end position="290"/>
    </location>
</feature>
<feature type="active site" evidence="1">
    <location>
        <position position="12"/>
    </location>
</feature>
<feature type="active site" evidence="1">
    <location>
        <position position="139"/>
    </location>
</feature>
<feature type="binding site" evidence="1">
    <location>
        <begin position="97"/>
        <end position="107"/>
    </location>
    <ligand>
        <name>ATP</name>
        <dbReference type="ChEBI" id="CHEBI:30616"/>
    </ligand>
</feature>
<dbReference type="EC" id="2.7.1.148" evidence="1"/>
<dbReference type="EMBL" id="CP000774">
    <property type="protein sequence ID" value="ABS62344.1"/>
    <property type="molecule type" value="Genomic_DNA"/>
</dbReference>
<dbReference type="RefSeq" id="WP_011995635.1">
    <property type="nucleotide sequence ID" value="NC_009719.1"/>
</dbReference>
<dbReference type="SMR" id="A7HR11"/>
<dbReference type="STRING" id="402881.Plav_0721"/>
<dbReference type="KEGG" id="pla:Plav_0721"/>
<dbReference type="eggNOG" id="COG1947">
    <property type="taxonomic scope" value="Bacteria"/>
</dbReference>
<dbReference type="HOGENOM" id="CLU_053057_1_0_5"/>
<dbReference type="OrthoDB" id="9809438at2"/>
<dbReference type="UniPathway" id="UPA00056">
    <property type="reaction ID" value="UER00094"/>
</dbReference>
<dbReference type="Proteomes" id="UP000006377">
    <property type="component" value="Chromosome"/>
</dbReference>
<dbReference type="GO" id="GO:0050515">
    <property type="term" value="F:4-(cytidine 5'-diphospho)-2-C-methyl-D-erythritol kinase activity"/>
    <property type="evidence" value="ECO:0007669"/>
    <property type="project" value="UniProtKB-UniRule"/>
</dbReference>
<dbReference type="GO" id="GO:0005524">
    <property type="term" value="F:ATP binding"/>
    <property type="evidence" value="ECO:0007669"/>
    <property type="project" value="UniProtKB-UniRule"/>
</dbReference>
<dbReference type="GO" id="GO:0019288">
    <property type="term" value="P:isopentenyl diphosphate biosynthetic process, methylerythritol 4-phosphate pathway"/>
    <property type="evidence" value="ECO:0007669"/>
    <property type="project" value="UniProtKB-UniRule"/>
</dbReference>
<dbReference type="GO" id="GO:0016114">
    <property type="term" value="P:terpenoid biosynthetic process"/>
    <property type="evidence" value="ECO:0007669"/>
    <property type="project" value="InterPro"/>
</dbReference>
<dbReference type="Gene3D" id="3.30.230.10">
    <property type="match status" value="1"/>
</dbReference>
<dbReference type="Gene3D" id="3.30.70.890">
    <property type="entry name" value="GHMP kinase, C-terminal domain"/>
    <property type="match status" value="1"/>
</dbReference>
<dbReference type="HAMAP" id="MF_00061">
    <property type="entry name" value="IspE"/>
    <property type="match status" value="1"/>
</dbReference>
<dbReference type="InterPro" id="IPR013750">
    <property type="entry name" value="GHMP_kinase_C_dom"/>
</dbReference>
<dbReference type="InterPro" id="IPR036554">
    <property type="entry name" value="GHMP_kinase_C_sf"/>
</dbReference>
<dbReference type="InterPro" id="IPR006204">
    <property type="entry name" value="GHMP_kinase_N_dom"/>
</dbReference>
<dbReference type="InterPro" id="IPR004424">
    <property type="entry name" value="IspE"/>
</dbReference>
<dbReference type="InterPro" id="IPR020568">
    <property type="entry name" value="Ribosomal_Su5_D2-typ_SF"/>
</dbReference>
<dbReference type="InterPro" id="IPR014721">
    <property type="entry name" value="Ribsml_uS5_D2-typ_fold_subgr"/>
</dbReference>
<dbReference type="NCBIfam" id="TIGR00154">
    <property type="entry name" value="ispE"/>
    <property type="match status" value="1"/>
</dbReference>
<dbReference type="NCBIfam" id="NF011202">
    <property type="entry name" value="PRK14608.1"/>
    <property type="match status" value="1"/>
</dbReference>
<dbReference type="PANTHER" id="PTHR43527">
    <property type="entry name" value="4-DIPHOSPHOCYTIDYL-2-C-METHYL-D-ERYTHRITOL KINASE, CHLOROPLASTIC"/>
    <property type="match status" value="1"/>
</dbReference>
<dbReference type="PANTHER" id="PTHR43527:SF2">
    <property type="entry name" value="4-DIPHOSPHOCYTIDYL-2-C-METHYL-D-ERYTHRITOL KINASE, CHLOROPLASTIC"/>
    <property type="match status" value="1"/>
</dbReference>
<dbReference type="Pfam" id="PF08544">
    <property type="entry name" value="GHMP_kinases_C"/>
    <property type="match status" value="1"/>
</dbReference>
<dbReference type="Pfam" id="PF00288">
    <property type="entry name" value="GHMP_kinases_N"/>
    <property type="match status" value="1"/>
</dbReference>
<dbReference type="PIRSF" id="PIRSF010376">
    <property type="entry name" value="IspE"/>
    <property type="match status" value="1"/>
</dbReference>
<dbReference type="SUPFAM" id="SSF55060">
    <property type="entry name" value="GHMP Kinase, C-terminal domain"/>
    <property type="match status" value="1"/>
</dbReference>
<dbReference type="SUPFAM" id="SSF54211">
    <property type="entry name" value="Ribosomal protein S5 domain 2-like"/>
    <property type="match status" value="1"/>
</dbReference>
<protein>
    <recommendedName>
        <fullName evidence="1">4-diphosphocytidyl-2-C-methyl-D-erythritol kinase</fullName>
        <shortName evidence="1">CMK</shortName>
        <ecNumber evidence="1">2.7.1.148</ecNumber>
    </recommendedName>
    <alternativeName>
        <fullName evidence="1">4-(cytidine-5'-diphospho)-2-C-methyl-D-erythritol kinase</fullName>
    </alternativeName>
</protein>
<evidence type="ECO:0000255" key="1">
    <source>
        <dbReference type="HAMAP-Rule" id="MF_00061"/>
    </source>
</evidence>
<sequence length="290" mass="29806">MSGPVTEAARAKINLTLRVLGKRADGYHELQSLVVFAQSGDRLTAREADELRLDVAGRFAAALQGEPDNLVLRAARMLREETGIKSGAHLTLEKNLPVASGIGGGSADAAAALRALTALWGVAPGDEVLSRIAAALGADVLVCLHSRTAMMWGKGEKIMPLADLPRFWLVLANAGIALSTAAVFRELAAAPLAAAPSDPAPVPPGTLDDLAAWLAAEGNDLEPPALTLAPEIGETISALALTAGCLLARMSGSGATCFGLYAAEEEAREAALVLQAAHPGWWLEVSAAGG</sequence>
<name>ISPE_PARL1</name>
<reference key="1">
    <citation type="journal article" date="2011" name="Stand. Genomic Sci.">
        <title>Complete genome sequence of Parvibaculum lavamentivorans type strain (DS-1(T)).</title>
        <authorList>
            <person name="Schleheck D."/>
            <person name="Weiss M."/>
            <person name="Pitluck S."/>
            <person name="Bruce D."/>
            <person name="Land M.L."/>
            <person name="Han S."/>
            <person name="Saunders E."/>
            <person name="Tapia R."/>
            <person name="Detter C."/>
            <person name="Brettin T."/>
            <person name="Han J."/>
            <person name="Woyke T."/>
            <person name="Goodwin L."/>
            <person name="Pennacchio L."/>
            <person name="Nolan M."/>
            <person name="Cook A.M."/>
            <person name="Kjelleberg S."/>
            <person name="Thomas T."/>
        </authorList>
    </citation>
    <scope>NUCLEOTIDE SEQUENCE [LARGE SCALE GENOMIC DNA]</scope>
    <source>
        <strain>DS-1 / DSM 13023 / NCIMB 13966</strain>
    </source>
</reference>
<gene>
    <name evidence="1" type="primary">ispE</name>
    <name type="ordered locus">Plav_0721</name>
</gene>